<name>RL1_GLOC7</name>
<organism>
    <name type="scientific">Gloeothece citriformis (strain PCC 7424)</name>
    <name type="common">Cyanothece sp. (strain PCC 7424)</name>
    <dbReference type="NCBI Taxonomy" id="65393"/>
    <lineage>
        <taxon>Bacteria</taxon>
        <taxon>Bacillati</taxon>
        <taxon>Cyanobacteriota</taxon>
        <taxon>Cyanophyceae</taxon>
        <taxon>Oscillatoriophycideae</taxon>
        <taxon>Chroococcales</taxon>
        <taxon>Aphanothecaceae</taxon>
        <taxon>Gloeothece</taxon>
        <taxon>Gloeothece citriformis</taxon>
    </lineage>
</organism>
<keyword id="KW-1185">Reference proteome</keyword>
<keyword id="KW-0678">Repressor</keyword>
<keyword id="KW-0687">Ribonucleoprotein</keyword>
<keyword id="KW-0689">Ribosomal protein</keyword>
<keyword id="KW-0694">RNA-binding</keyword>
<keyword id="KW-0699">rRNA-binding</keyword>
<keyword id="KW-0810">Translation regulation</keyword>
<keyword id="KW-0820">tRNA-binding</keyword>
<comment type="function">
    <text evidence="1">Binds directly to 23S rRNA. The L1 stalk is quite mobile in the ribosome, and is involved in E site tRNA release.</text>
</comment>
<comment type="function">
    <text evidence="1">Protein L1 is also a translational repressor protein, it controls the translation of the L11 operon by binding to its mRNA.</text>
</comment>
<comment type="subunit">
    <text evidence="1">Part of the 50S ribosomal subunit.</text>
</comment>
<comment type="similarity">
    <text evidence="1">Belongs to the universal ribosomal protein uL1 family.</text>
</comment>
<protein>
    <recommendedName>
        <fullName evidence="1">Large ribosomal subunit protein uL1</fullName>
    </recommendedName>
    <alternativeName>
        <fullName evidence="2">50S ribosomal protein L1</fullName>
    </alternativeName>
</protein>
<accession>B7KIR7</accession>
<sequence>MAKKLSRRFKEALAKVDQDKAYEPLEALNLLKETATAKFDETAEVHVRLGIDPKYTDQQLRTTVTFPKGTGQTVRVAVIARGEKVQEASSAGADIVGSEELIDEIQNGMMDFEVLIATPDMMPKVAKLGRLLGPRGLMPSPKGGTVTTDLAAAIQEFKAGKQEFRADRTGIVHVMFGKASFTAEDLLVNLKALQETIDRNRPSGAKGRYWRTVFVSASMGPSIQVDVNSLRDLKVTEA</sequence>
<feature type="chain" id="PRO_1000141387" description="Large ribosomal subunit protein uL1">
    <location>
        <begin position="1"/>
        <end position="238"/>
    </location>
</feature>
<evidence type="ECO:0000255" key="1">
    <source>
        <dbReference type="HAMAP-Rule" id="MF_01318"/>
    </source>
</evidence>
<evidence type="ECO:0000305" key="2"/>
<gene>
    <name evidence="1" type="primary">rplA</name>
    <name evidence="1" type="synonym">rpl1</name>
    <name type="ordered locus">PCC7424_1019</name>
</gene>
<reference key="1">
    <citation type="journal article" date="2011" name="MBio">
        <title>Novel metabolic attributes of the genus Cyanothece, comprising a group of unicellular nitrogen-fixing Cyanobacteria.</title>
        <authorList>
            <person name="Bandyopadhyay A."/>
            <person name="Elvitigala T."/>
            <person name="Welsh E."/>
            <person name="Stockel J."/>
            <person name="Liberton M."/>
            <person name="Min H."/>
            <person name="Sherman L.A."/>
            <person name="Pakrasi H.B."/>
        </authorList>
    </citation>
    <scope>NUCLEOTIDE SEQUENCE [LARGE SCALE GENOMIC DNA]</scope>
    <source>
        <strain>PCC 7424</strain>
    </source>
</reference>
<proteinExistence type="inferred from homology"/>
<dbReference type="EMBL" id="CP001291">
    <property type="protein sequence ID" value="ACK69473.1"/>
    <property type="molecule type" value="Genomic_DNA"/>
</dbReference>
<dbReference type="RefSeq" id="WP_012598420.1">
    <property type="nucleotide sequence ID" value="NC_011729.1"/>
</dbReference>
<dbReference type="SMR" id="B7KIR7"/>
<dbReference type="STRING" id="65393.PCC7424_1019"/>
<dbReference type="KEGG" id="cyc:PCC7424_1019"/>
<dbReference type="eggNOG" id="COG0081">
    <property type="taxonomic scope" value="Bacteria"/>
</dbReference>
<dbReference type="HOGENOM" id="CLU_062853_0_0_3"/>
<dbReference type="OrthoDB" id="9803740at2"/>
<dbReference type="Proteomes" id="UP000002384">
    <property type="component" value="Chromosome"/>
</dbReference>
<dbReference type="GO" id="GO:0015934">
    <property type="term" value="C:large ribosomal subunit"/>
    <property type="evidence" value="ECO:0007669"/>
    <property type="project" value="InterPro"/>
</dbReference>
<dbReference type="GO" id="GO:0019843">
    <property type="term" value="F:rRNA binding"/>
    <property type="evidence" value="ECO:0007669"/>
    <property type="project" value="UniProtKB-UniRule"/>
</dbReference>
<dbReference type="GO" id="GO:0003735">
    <property type="term" value="F:structural constituent of ribosome"/>
    <property type="evidence" value="ECO:0007669"/>
    <property type="project" value="InterPro"/>
</dbReference>
<dbReference type="GO" id="GO:0000049">
    <property type="term" value="F:tRNA binding"/>
    <property type="evidence" value="ECO:0007669"/>
    <property type="project" value="UniProtKB-KW"/>
</dbReference>
<dbReference type="GO" id="GO:0006417">
    <property type="term" value="P:regulation of translation"/>
    <property type="evidence" value="ECO:0007669"/>
    <property type="project" value="UniProtKB-KW"/>
</dbReference>
<dbReference type="GO" id="GO:0006412">
    <property type="term" value="P:translation"/>
    <property type="evidence" value="ECO:0007669"/>
    <property type="project" value="UniProtKB-UniRule"/>
</dbReference>
<dbReference type="CDD" id="cd00403">
    <property type="entry name" value="Ribosomal_L1"/>
    <property type="match status" value="1"/>
</dbReference>
<dbReference type="FunFam" id="3.40.50.790:FF:000001">
    <property type="entry name" value="50S ribosomal protein L1"/>
    <property type="match status" value="1"/>
</dbReference>
<dbReference type="Gene3D" id="3.30.190.20">
    <property type="match status" value="1"/>
</dbReference>
<dbReference type="Gene3D" id="3.40.50.790">
    <property type="match status" value="1"/>
</dbReference>
<dbReference type="HAMAP" id="MF_01318_B">
    <property type="entry name" value="Ribosomal_uL1_B"/>
    <property type="match status" value="1"/>
</dbReference>
<dbReference type="InterPro" id="IPR005878">
    <property type="entry name" value="Ribosom_uL1_bac-type"/>
</dbReference>
<dbReference type="InterPro" id="IPR002143">
    <property type="entry name" value="Ribosomal_uL1"/>
</dbReference>
<dbReference type="InterPro" id="IPR023674">
    <property type="entry name" value="Ribosomal_uL1-like"/>
</dbReference>
<dbReference type="InterPro" id="IPR028364">
    <property type="entry name" value="Ribosomal_uL1/biogenesis"/>
</dbReference>
<dbReference type="InterPro" id="IPR016095">
    <property type="entry name" value="Ribosomal_uL1_3-a/b-sand"/>
</dbReference>
<dbReference type="InterPro" id="IPR023673">
    <property type="entry name" value="Ribosomal_uL1_CS"/>
</dbReference>
<dbReference type="NCBIfam" id="TIGR01169">
    <property type="entry name" value="rplA_bact"/>
    <property type="match status" value="1"/>
</dbReference>
<dbReference type="PANTHER" id="PTHR36427">
    <property type="entry name" value="54S RIBOSOMAL PROTEIN L1, MITOCHONDRIAL"/>
    <property type="match status" value="1"/>
</dbReference>
<dbReference type="PANTHER" id="PTHR36427:SF3">
    <property type="entry name" value="LARGE RIBOSOMAL SUBUNIT PROTEIN UL1M"/>
    <property type="match status" value="1"/>
</dbReference>
<dbReference type="Pfam" id="PF00687">
    <property type="entry name" value="Ribosomal_L1"/>
    <property type="match status" value="1"/>
</dbReference>
<dbReference type="PIRSF" id="PIRSF002155">
    <property type="entry name" value="Ribosomal_L1"/>
    <property type="match status" value="1"/>
</dbReference>
<dbReference type="SUPFAM" id="SSF56808">
    <property type="entry name" value="Ribosomal protein L1"/>
    <property type="match status" value="1"/>
</dbReference>
<dbReference type="PROSITE" id="PS01199">
    <property type="entry name" value="RIBOSOMAL_L1"/>
    <property type="match status" value="1"/>
</dbReference>